<organism>
    <name type="scientific">Cupriavidus necator (strain ATCC 17699 / DSM 428 / KCTC 22496 / NCIMB 10442 / H16 / Stanier 337)</name>
    <name type="common">Ralstonia eutropha</name>
    <dbReference type="NCBI Taxonomy" id="381666"/>
    <lineage>
        <taxon>Bacteria</taxon>
        <taxon>Pseudomonadati</taxon>
        <taxon>Pseudomonadota</taxon>
        <taxon>Betaproteobacteria</taxon>
        <taxon>Burkholderiales</taxon>
        <taxon>Burkholderiaceae</taxon>
        <taxon>Cupriavidus</taxon>
    </lineage>
</organism>
<comment type="similarity">
    <text evidence="2">Belongs to the UPF0758 family.</text>
</comment>
<dbReference type="EMBL" id="AM260479">
    <property type="protein sequence ID" value="CAJ94108.1"/>
    <property type="molecule type" value="Genomic_DNA"/>
</dbReference>
<dbReference type="SMR" id="Q0K7B3"/>
<dbReference type="STRING" id="381666.H16_A3033"/>
<dbReference type="KEGG" id="reh:H16_A3033"/>
<dbReference type="eggNOG" id="COG2003">
    <property type="taxonomic scope" value="Bacteria"/>
</dbReference>
<dbReference type="HOGENOM" id="CLU_073529_0_0_4"/>
<dbReference type="OrthoDB" id="9804482at2"/>
<dbReference type="Proteomes" id="UP000008210">
    <property type="component" value="Chromosome 1"/>
</dbReference>
<dbReference type="GO" id="GO:0046872">
    <property type="term" value="F:metal ion binding"/>
    <property type="evidence" value="ECO:0007669"/>
    <property type="project" value="UniProtKB-KW"/>
</dbReference>
<dbReference type="GO" id="GO:0008237">
    <property type="term" value="F:metallopeptidase activity"/>
    <property type="evidence" value="ECO:0007669"/>
    <property type="project" value="UniProtKB-KW"/>
</dbReference>
<dbReference type="GO" id="GO:0006508">
    <property type="term" value="P:proteolysis"/>
    <property type="evidence" value="ECO:0007669"/>
    <property type="project" value="UniProtKB-KW"/>
</dbReference>
<dbReference type="CDD" id="cd08071">
    <property type="entry name" value="MPN_DUF2466"/>
    <property type="match status" value="1"/>
</dbReference>
<dbReference type="Gene3D" id="1.10.150.20">
    <property type="entry name" value="5' to 3' exonuclease, C-terminal subdomain"/>
    <property type="match status" value="1"/>
</dbReference>
<dbReference type="Gene3D" id="3.40.140.10">
    <property type="entry name" value="Cytidine Deaminase, domain 2"/>
    <property type="match status" value="1"/>
</dbReference>
<dbReference type="InterPro" id="IPR037518">
    <property type="entry name" value="MPN"/>
</dbReference>
<dbReference type="InterPro" id="IPR025657">
    <property type="entry name" value="RadC_JAB"/>
</dbReference>
<dbReference type="InterPro" id="IPR010994">
    <property type="entry name" value="RuvA_2-like"/>
</dbReference>
<dbReference type="InterPro" id="IPR001405">
    <property type="entry name" value="UPF0758"/>
</dbReference>
<dbReference type="InterPro" id="IPR046778">
    <property type="entry name" value="UPF0758_N"/>
</dbReference>
<dbReference type="NCBIfam" id="NF000642">
    <property type="entry name" value="PRK00024.1"/>
    <property type="match status" value="1"/>
</dbReference>
<dbReference type="NCBIfam" id="TIGR00608">
    <property type="entry name" value="radc"/>
    <property type="match status" value="1"/>
</dbReference>
<dbReference type="PANTHER" id="PTHR30471">
    <property type="entry name" value="DNA REPAIR PROTEIN RADC"/>
    <property type="match status" value="1"/>
</dbReference>
<dbReference type="PANTHER" id="PTHR30471:SF3">
    <property type="entry name" value="UPF0758 PROTEIN YEES-RELATED"/>
    <property type="match status" value="1"/>
</dbReference>
<dbReference type="Pfam" id="PF04002">
    <property type="entry name" value="RadC"/>
    <property type="match status" value="1"/>
</dbReference>
<dbReference type="Pfam" id="PF20582">
    <property type="entry name" value="UPF0758_N"/>
    <property type="match status" value="1"/>
</dbReference>
<dbReference type="SUPFAM" id="SSF47781">
    <property type="entry name" value="RuvA domain 2-like"/>
    <property type="match status" value="1"/>
</dbReference>
<dbReference type="PROSITE" id="PS50249">
    <property type="entry name" value="MPN"/>
    <property type="match status" value="1"/>
</dbReference>
<gene>
    <name type="ordered locus">H16_A3033</name>
</gene>
<name>Y3033_CUPNH</name>
<proteinExistence type="inferred from homology"/>
<sequence length="228" mass="24919">MTIANWPACERPREKLMESGAAALSDAELLAILLRVGAAGKSAVDLARELLHRFGSLTALFAAEGRALTSVRGMGETKYAQLQAIPELARRALAESLRLPTGFDGPAAVRNYLRLTLAPLPHEVFLCLFLDPRNRMVASEEMFRGTLTRTAVYPREVARQALVHNAAGIIVAHNHPRGTTAPSQSDIRLTHELARTLDLIDVRLLDHFIVAGQEIRSLADCCDRLPGL</sequence>
<reference key="1">
    <citation type="journal article" date="2006" name="Nat. Biotechnol.">
        <title>Genome sequence of the bioplastic-producing 'Knallgas' bacterium Ralstonia eutropha H16.</title>
        <authorList>
            <person name="Pohlmann A."/>
            <person name="Fricke W.F."/>
            <person name="Reinecke F."/>
            <person name="Kusian B."/>
            <person name="Liesegang H."/>
            <person name="Cramm R."/>
            <person name="Eitinger T."/>
            <person name="Ewering C."/>
            <person name="Poetter M."/>
            <person name="Schwartz E."/>
            <person name="Strittmatter A."/>
            <person name="Voss I."/>
            <person name="Gottschalk G."/>
            <person name="Steinbuechel A."/>
            <person name="Friedrich B."/>
            <person name="Bowien B."/>
        </authorList>
    </citation>
    <scope>NUCLEOTIDE SEQUENCE [LARGE SCALE GENOMIC DNA]</scope>
    <source>
        <strain>ATCC 17699 / DSM 428 / KCTC 22496 / NCIMB 10442 / H16 / Stanier 337</strain>
    </source>
</reference>
<evidence type="ECO:0000255" key="1">
    <source>
        <dbReference type="PROSITE-ProRule" id="PRU01182"/>
    </source>
</evidence>
<evidence type="ECO:0000305" key="2"/>
<feature type="chain" id="PRO_1000001685" description="UPF0758 protein H16_A3033">
    <location>
        <begin position="1"/>
        <end position="228"/>
    </location>
</feature>
<feature type="domain" description="MPN" evidence="1">
    <location>
        <begin position="102"/>
        <end position="224"/>
    </location>
</feature>
<feature type="short sequence motif" description="JAMM motif" evidence="1">
    <location>
        <begin position="173"/>
        <end position="186"/>
    </location>
</feature>
<feature type="binding site" evidence="1">
    <location>
        <position position="173"/>
    </location>
    <ligand>
        <name>Zn(2+)</name>
        <dbReference type="ChEBI" id="CHEBI:29105"/>
        <note>catalytic</note>
    </ligand>
</feature>
<feature type="binding site" evidence="1">
    <location>
        <position position="175"/>
    </location>
    <ligand>
        <name>Zn(2+)</name>
        <dbReference type="ChEBI" id="CHEBI:29105"/>
        <note>catalytic</note>
    </ligand>
</feature>
<feature type="binding site" evidence="1">
    <location>
        <position position="186"/>
    </location>
    <ligand>
        <name>Zn(2+)</name>
        <dbReference type="ChEBI" id="CHEBI:29105"/>
        <note>catalytic</note>
    </ligand>
</feature>
<protein>
    <recommendedName>
        <fullName>UPF0758 protein H16_A3033</fullName>
    </recommendedName>
</protein>
<keyword id="KW-0378">Hydrolase</keyword>
<keyword id="KW-0479">Metal-binding</keyword>
<keyword id="KW-0482">Metalloprotease</keyword>
<keyword id="KW-0645">Protease</keyword>
<keyword id="KW-1185">Reference proteome</keyword>
<keyword id="KW-0862">Zinc</keyword>
<accession>Q0K7B3</accession>